<proteinExistence type="inferred from homology"/>
<organism>
    <name type="scientific">Archaeoglobus fulgidus (strain ATCC 49558 / DSM 4304 / JCM 9628 / NBRC 100126 / VC-16)</name>
    <dbReference type="NCBI Taxonomy" id="224325"/>
    <lineage>
        <taxon>Archaea</taxon>
        <taxon>Methanobacteriati</taxon>
        <taxon>Methanobacteriota</taxon>
        <taxon>Archaeoglobi</taxon>
        <taxon>Archaeoglobales</taxon>
        <taxon>Archaeoglobaceae</taxon>
        <taxon>Archaeoglobus</taxon>
    </lineage>
</organism>
<evidence type="ECO:0000255" key="1"/>
<evidence type="ECO:0000305" key="2"/>
<comment type="subcellular location">
    <subcellularLocation>
        <location evidence="2">Cell membrane</location>
        <topology evidence="2">Multi-pass membrane protein</topology>
    </subcellularLocation>
</comment>
<comment type="similarity">
    <text evidence="2">Belongs to the oxidase-dependent Fe transporter (OFeT) (TC 9.A.10.1) family.</text>
</comment>
<reference key="1">
    <citation type="journal article" date="1997" name="Nature">
        <title>The complete genome sequence of the hyperthermophilic, sulphate-reducing archaeon Archaeoglobus fulgidus.</title>
        <authorList>
            <person name="Klenk H.-P."/>
            <person name="Clayton R.A."/>
            <person name="Tomb J.-F."/>
            <person name="White O."/>
            <person name="Nelson K.E."/>
            <person name="Ketchum K.A."/>
            <person name="Dodson R.J."/>
            <person name="Gwinn M.L."/>
            <person name="Hickey E.K."/>
            <person name="Peterson J.D."/>
            <person name="Richardson D.L."/>
            <person name="Kerlavage A.R."/>
            <person name="Graham D.E."/>
            <person name="Kyrpides N.C."/>
            <person name="Fleischmann R.D."/>
            <person name="Quackenbush J."/>
            <person name="Lee N.H."/>
            <person name="Sutton G.G."/>
            <person name="Gill S.R."/>
            <person name="Kirkness E.F."/>
            <person name="Dougherty B.A."/>
            <person name="McKenney K."/>
            <person name="Adams M.D."/>
            <person name="Loftus B.J."/>
            <person name="Peterson S.N."/>
            <person name="Reich C.I."/>
            <person name="McNeil L.K."/>
            <person name="Badger J.H."/>
            <person name="Glodek A."/>
            <person name="Zhou L."/>
            <person name="Overbeek R."/>
            <person name="Gocayne J.D."/>
            <person name="Weidman J.F."/>
            <person name="McDonald L.A."/>
            <person name="Utterback T.R."/>
            <person name="Cotton M.D."/>
            <person name="Spriggs T."/>
            <person name="Artiach P."/>
            <person name="Kaine B.P."/>
            <person name="Sykes S.M."/>
            <person name="Sadow P.W."/>
            <person name="D'Andrea K.P."/>
            <person name="Bowman C."/>
            <person name="Fujii C."/>
            <person name="Garland S.A."/>
            <person name="Mason T.M."/>
            <person name="Olsen G.J."/>
            <person name="Fraser C.M."/>
            <person name="Smith H.O."/>
            <person name="Woese C.R."/>
            <person name="Venter J.C."/>
        </authorList>
    </citation>
    <scope>NUCLEOTIDE SEQUENCE [LARGE SCALE GENOMIC DNA]</scope>
    <source>
        <strain>ATCC 49558 / DSM 4304 / JCM 9628 / NBRC 100126 / VC-16</strain>
    </source>
</reference>
<gene>
    <name type="ordered locus">AF_0154</name>
</gene>
<sequence length="277" mass="30504">MLKMMGQMVITLREGFEAALLVAVLVAYLKRSGRTEEVRFAYYGTIAAIAAGFAIATAVIVAYGGLHGEQKELFEGFASYLAVGVLTYMILWMAGKDVRGEVERRAEAKFKWGIALIAFVFVVREVIETVLFLTPFAIAEFTTTVIGASAGAAVAITLAVLILRFEYRMSLRRFFYATSVLLAFIAAGLLGYGTHEFVEVLEEEGFEHPLFEKAYSLGIDESNPLHHKGLIGGILAVMFGYSASMEWVRLILQLGYLAAMLGLIHRSYGRVTERAEV</sequence>
<name>Y154_ARCFU</name>
<dbReference type="EMBL" id="AE000782">
    <property type="protein sequence ID" value="AAB91078.1"/>
    <property type="molecule type" value="Genomic_DNA"/>
</dbReference>
<dbReference type="PIR" id="B69269">
    <property type="entry name" value="B69269"/>
</dbReference>
<dbReference type="RefSeq" id="WP_010877666.1">
    <property type="nucleotide sequence ID" value="NC_000917.1"/>
</dbReference>
<dbReference type="STRING" id="224325.AF_0154"/>
<dbReference type="PaxDb" id="224325-AF_0154"/>
<dbReference type="EnsemblBacteria" id="AAB91078">
    <property type="protein sequence ID" value="AAB91078"/>
    <property type="gene ID" value="AF_0154"/>
</dbReference>
<dbReference type="KEGG" id="afu:AF_0154"/>
<dbReference type="eggNOG" id="arCOG04330">
    <property type="taxonomic scope" value="Archaea"/>
</dbReference>
<dbReference type="HOGENOM" id="CLU_077905_0_1_2"/>
<dbReference type="OrthoDB" id="99335at2157"/>
<dbReference type="PhylomeDB" id="O30083"/>
<dbReference type="Proteomes" id="UP000002199">
    <property type="component" value="Chromosome"/>
</dbReference>
<dbReference type="GO" id="GO:0033573">
    <property type="term" value="C:high-affinity iron permease complex"/>
    <property type="evidence" value="ECO:0007669"/>
    <property type="project" value="InterPro"/>
</dbReference>
<dbReference type="GO" id="GO:0015093">
    <property type="term" value="F:ferrous iron transmembrane transporter activity"/>
    <property type="evidence" value="ECO:0007669"/>
    <property type="project" value="TreeGrafter"/>
</dbReference>
<dbReference type="InterPro" id="IPR005217">
    <property type="entry name" value="EfeU/FTR1-like"/>
</dbReference>
<dbReference type="InterPro" id="IPR004923">
    <property type="entry name" value="FTR1/Fip1/EfeU"/>
</dbReference>
<dbReference type="NCBIfam" id="TIGR00145">
    <property type="entry name" value="EfeU/Ftr1 family ferrous iron transporter subunit"/>
    <property type="match status" value="1"/>
</dbReference>
<dbReference type="PANTHER" id="PTHR31632">
    <property type="entry name" value="IRON TRANSPORTER FTH1"/>
    <property type="match status" value="1"/>
</dbReference>
<dbReference type="PANTHER" id="PTHR31632:SF2">
    <property type="entry name" value="PLASMA MEMBRANE IRON PERMEASE"/>
    <property type="match status" value="1"/>
</dbReference>
<dbReference type="Pfam" id="PF03239">
    <property type="entry name" value="FTR1"/>
    <property type="match status" value="1"/>
</dbReference>
<feature type="chain" id="PRO_0000159654" description="Uncharacterized protein AF_0154">
    <location>
        <begin position="1"/>
        <end position="277"/>
    </location>
</feature>
<feature type="transmembrane region" description="Helical" evidence="1">
    <location>
        <begin position="46"/>
        <end position="66"/>
    </location>
</feature>
<feature type="transmembrane region" description="Helical" evidence="1">
    <location>
        <begin position="73"/>
        <end position="93"/>
    </location>
</feature>
<feature type="transmembrane region" description="Helical" evidence="1">
    <location>
        <begin position="143"/>
        <end position="163"/>
    </location>
</feature>
<feature type="transmembrane region" description="Helical" evidence="1">
    <location>
        <begin position="174"/>
        <end position="194"/>
    </location>
</feature>
<feature type="transmembrane region" description="Helical" evidence="1">
    <location>
        <begin position="228"/>
        <end position="248"/>
    </location>
</feature>
<protein>
    <recommendedName>
        <fullName>Uncharacterized protein AF_0154</fullName>
    </recommendedName>
</protein>
<accession>O30083</accession>
<keyword id="KW-1003">Cell membrane</keyword>
<keyword id="KW-0472">Membrane</keyword>
<keyword id="KW-1185">Reference proteome</keyword>
<keyword id="KW-0812">Transmembrane</keyword>
<keyword id="KW-1133">Transmembrane helix</keyword>